<proteinExistence type="inferred from homology"/>
<gene>
    <name evidence="5" type="primary">dmxR1</name>
</gene>
<feature type="chain" id="PRO_0000453433" description="Atrochrysone carboxyl ACP thioesterase dmxR1">
    <location>
        <begin position="1"/>
        <end position="322"/>
    </location>
</feature>
<feature type="active site" description="Proton donor/acceptor" evidence="3">
    <location>
        <position position="109"/>
    </location>
</feature>
<feature type="binding site" evidence="2">
    <location>
        <position position="105"/>
    </location>
    <ligand>
        <name>Zn(2+)</name>
        <dbReference type="ChEBI" id="CHEBI:29105"/>
        <label>1</label>
        <note>catalytic</note>
    </ligand>
</feature>
<feature type="binding site" evidence="2">
    <location>
        <position position="107"/>
    </location>
    <ligand>
        <name>Zn(2+)</name>
        <dbReference type="ChEBI" id="CHEBI:29105"/>
        <label>1</label>
        <note>catalytic</note>
    </ligand>
</feature>
<feature type="binding site" evidence="2">
    <location>
        <position position="109"/>
    </location>
    <ligand>
        <name>Zn(2+)</name>
        <dbReference type="ChEBI" id="CHEBI:29105"/>
        <label>2</label>
        <note>catalytic</note>
    </ligand>
</feature>
<feature type="binding site" evidence="2">
    <location>
        <position position="110"/>
    </location>
    <ligand>
        <name>Zn(2+)</name>
        <dbReference type="ChEBI" id="CHEBI:29105"/>
        <label>2</label>
        <note>catalytic</note>
    </ligand>
</feature>
<accession>A0A4P8DJU1</accession>
<sequence>MAPGKGGYKQINKALNICAFEDYLDGQQATLPPLQDVEQISPRVIRVLGQNPGKFTLQGTNTYIVGTGSERLIIDTGQGIPDWADLISTTLLDGNFSLSHVLLTHWHGDHTGGVPDLLRLYPDLISGIYKHTPSKIQQPIEDGQVFKVEGATVRAVHAPGHSSDHMCFILEEEQAMFTGDNVLGHGTSAVEHLSTWMAALQQMKSHNCRKGYPAHGIVINDLQGRITGQLAQKFRRERQVLKALEQVKSQERAMAGGRGKGSVTVKQLVSTMHGDSLDGGIRELALEPFTEEILRKLAEDGKVAFEIRTGIKKWFVVGTALD</sequence>
<reference key="1">
    <citation type="journal article" date="2019" name="Chem. Sci.">
        <title>Structure revision of cryptosporioptides and determination of the genetic basis for dimeric xanthone biosynthesis in fungi.</title>
        <authorList>
            <person name="Greco C."/>
            <person name="de Mattos-Shipley K."/>
            <person name="Bailey A.M."/>
            <person name="Mulholland N.P."/>
            <person name="Vincent J.L."/>
            <person name="Willis C.L."/>
            <person name="Cox R.J."/>
            <person name="Simpson T.J."/>
        </authorList>
    </citation>
    <scope>NUCLEOTIDE SEQUENCE [GENOMIC DNA]</scope>
    <scope>FUNCTION</scope>
    <scope>PATHWAY</scope>
    <source>
        <strain>8999</strain>
    </source>
</reference>
<comment type="function">
    <text evidence="4 7">Atrochrysone carboxyl ACP thioesterase; part of the gene cluster that mediates the biosynthesis of the dimeric xanthones cryptosporioptides (PubMed:30996871). The pathway begins with the synthesis of atrochrysone thioester by the polyketide synthase dmx-nrPKS (Probable). The atrochrysone carboxyl ACP thioesterase dmxR1 then breaks the thioester bond and releases the atrochrysone carboxylic acid from dmx-nrPKS (Probable). Atrochrysone carboxylic acid is decarboxylated by the decarboxylase dmxR15, and oxidized by the anthrone oxygenase dmxR16 to yield emodin (Probable). Emodin is then reduced to emodin hydroquinone by the oxidoreductase dmxR7 (Probable). A-ring reduction by the short chain dehydrogenase dmxR18, dehydration by the scytalone dehydratase-like protein dmxR17 and probable spontaneous re-oxidation, results in overall deoxygenation to chrysophanol (PubMed:30996871). Baeyer-Villiger oxidation by the Baeyer-Villiger monooxygenase (BVMO) dmxR6 then yields monodictylactone in equilibrium with monodictyphenone (PubMed:30996871). In the case of the cryptosporioptides biosynthesis, monodictylactone is reduced at C-12 to an alcohol (by the short chain dehydrogenases dmxR12 or dmxR8) and hydroxylated at C-5 by dmxR9, yielding the electron-rich aromatic which could eliminate H(2)O to form the ortho-quinonemethide, followed by tautomerisation to paraquinone and complete the formal reduction to produce the 10-methylgroup (Probable). Conjugate addition of C-4a-OH to the resulting paraquinone by the monooxygenase dmxR10 then gives cyclohexadienone, which is then reduced at C-5 by the short chain dehydrogenase dmxR3 to give the dihydroxanthone (Probable). The 6,7-epoxide in the cryptosporioptides could be introduced by the cytochrome P450 monooxygenase dmxL3 (Probable). The highly reducing PKS dmxL2 manufactures butyrate, which is further carboxylated by dmxL1 to form ethylmalonate (PubMed:30996871). It is not yet clear whether the carboxylation occurs while the butyrate is attached to the ACP of dmxL2, but this unusual fungal metabolite could then be esterified to O-5 by the O-acetyltransferase dmxR13 (PubMed:30996871). Finally, dimerization performed by dmxR5 gives the observed dimers cryptosporioptides A, B and C as the final products of the pathway (PubMed:30996871).</text>
</comment>
<comment type="catalytic activity">
    <reaction evidence="1">
        <text>atrochrysone carboxyl-[ACP] + H2O = atrochrysone carboxylate + holo-[ACP] + H(+)</text>
        <dbReference type="Rhea" id="RHEA:64236"/>
        <dbReference type="Rhea" id="RHEA-COMP:9685"/>
        <dbReference type="Rhea" id="RHEA-COMP:16552"/>
        <dbReference type="ChEBI" id="CHEBI:15377"/>
        <dbReference type="ChEBI" id="CHEBI:15378"/>
        <dbReference type="ChEBI" id="CHEBI:64479"/>
        <dbReference type="ChEBI" id="CHEBI:149712"/>
        <dbReference type="ChEBI" id="CHEBI:149713"/>
    </reaction>
    <physiologicalReaction direction="left-to-right" evidence="1">
        <dbReference type="Rhea" id="RHEA:64237"/>
    </physiologicalReaction>
</comment>
<comment type="cofactor">
    <cofactor evidence="2">
        <name>Zn(2+)</name>
        <dbReference type="ChEBI" id="CHEBI:29105"/>
    </cofactor>
    <text evidence="2">Binds 2 Zn(2+) ions per subunit.</text>
</comment>
<comment type="pathway">
    <text evidence="7">Secondary metabolite biosynthesis.</text>
</comment>
<comment type="similarity">
    <text evidence="6">Belongs to the metallo-beta-lactamase superfamily.</text>
</comment>
<dbReference type="EC" id="3.1.2.-" evidence="1"/>
<dbReference type="EMBL" id="MK182094">
    <property type="protein sequence ID" value="QCL09092.1"/>
    <property type="molecule type" value="Genomic_DNA"/>
</dbReference>
<dbReference type="SMR" id="A0A4P8DJU1"/>
<dbReference type="GO" id="GO:0016787">
    <property type="term" value="F:hydrolase activity"/>
    <property type="evidence" value="ECO:0007669"/>
    <property type="project" value="UniProtKB-KW"/>
</dbReference>
<dbReference type="GO" id="GO:0046872">
    <property type="term" value="F:metal ion binding"/>
    <property type="evidence" value="ECO:0007669"/>
    <property type="project" value="UniProtKB-KW"/>
</dbReference>
<dbReference type="GO" id="GO:0044550">
    <property type="term" value="P:secondary metabolite biosynthetic process"/>
    <property type="evidence" value="ECO:0007669"/>
    <property type="project" value="UniProtKB-ARBA"/>
</dbReference>
<dbReference type="CDD" id="cd07722">
    <property type="entry name" value="LACTB2-like_MBL-fold"/>
    <property type="match status" value="1"/>
</dbReference>
<dbReference type="FunFam" id="3.60.15.10:FF:000041">
    <property type="entry name" value="Metallo-beta-lactamase domain protein"/>
    <property type="match status" value="1"/>
</dbReference>
<dbReference type="Gene3D" id="3.60.15.10">
    <property type="entry name" value="Ribonuclease Z/Hydroxyacylglutathione hydrolase-like"/>
    <property type="match status" value="1"/>
</dbReference>
<dbReference type="Gene3D" id="1.10.10.10">
    <property type="entry name" value="Winged helix-like DNA-binding domain superfamily/Winged helix DNA-binding domain"/>
    <property type="match status" value="1"/>
</dbReference>
<dbReference type="InterPro" id="IPR047921">
    <property type="entry name" value="LACTB2-like_MBL-fold"/>
</dbReference>
<dbReference type="InterPro" id="IPR001279">
    <property type="entry name" value="Metallo-B-lactamas"/>
</dbReference>
<dbReference type="InterPro" id="IPR036866">
    <property type="entry name" value="RibonucZ/Hydroxyglut_hydro"/>
</dbReference>
<dbReference type="InterPro" id="IPR050662">
    <property type="entry name" value="Sec-metab_biosynth-thioest"/>
</dbReference>
<dbReference type="InterPro" id="IPR036388">
    <property type="entry name" value="WH-like_DNA-bd_sf"/>
</dbReference>
<dbReference type="PANTHER" id="PTHR23131:SF3">
    <property type="entry name" value="ATROCHRYSONE CARBOXYL ACP THIOESTERASE"/>
    <property type="match status" value="1"/>
</dbReference>
<dbReference type="PANTHER" id="PTHR23131">
    <property type="entry name" value="ENDORIBONUCLEASE LACTB2"/>
    <property type="match status" value="1"/>
</dbReference>
<dbReference type="Pfam" id="PF00753">
    <property type="entry name" value="Lactamase_B"/>
    <property type="match status" value="1"/>
</dbReference>
<dbReference type="SMART" id="SM00849">
    <property type="entry name" value="Lactamase_B"/>
    <property type="match status" value="1"/>
</dbReference>
<dbReference type="SUPFAM" id="SSF56281">
    <property type="entry name" value="Metallo-hydrolase/oxidoreductase"/>
    <property type="match status" value="1"/>
</dbReference>
<protein>
    <recommendedName>
        <fullName evidence="1">Atrochrysone carboxyl ACP thioesterase dmxR1</fullName>
        <shortName evidence="1">ACTE dmxR1</shortName>
        <ecNumber evidence="1">3.1.2.-</ecNumber>
    </recommendedName>
    <alternativeName>
        <fullName evidence="5">Dimeric xanthone biosynthesis cluster protein L</fullName>
    </alternativeName>
</protein>
<name>DMXR1_CRYX8</name>
<evidence type="ECO:0000250" key="1">
    <source>
        <dbReference type="UniProtKB" id="Q5BH31"/>
    </source>
</evidence>
<evidence type="ECO:0000250" key="2">
    <source>
        <dbReference type="UniProtKB" id="Q988B9"/>
    </source>
</evidence>
<evidence type="ECO:0000255" key="3"/>
<evidence type="ECO:0000269" key="4">
    <source>
    </source>
</evidence>
<evidence type="ECO:0000303" key="5">
    <source>
    </source>
</evidence>
<evidence type="ECO:0000305" key="6"/>
<evidence type="ECO:0000305" key="7">
    <source>
    </source>
</evidence>
<organism>
    <name type="scientific">Cryptosporiopsis sp. (strain 8999)</name>
    <dbReference type="NCBI Taxonomy" id="2572248"/>
    <lineage>
        <taxon>Eukaryota</taxon>
        <taxon>Fungi</taxon>
        <taxon>Dikarya</taxon>
        <taxon>Ascomycota</taxon>
        <taxon>Pezizomycotina</taxon>
        <taxon>Leotiomycetes</taxon>
        <taxon>Helotiales</taxon>
        <taxon>Dermateaceae</taxon>
        <taxon>Cryptosporiopsis</taxon>
    </lineage>
</organism>
<keyword id="KW-0378">Hydrolase</keyword>
<keyword id="KW-0479">Metal-binding</keyword>
<keyword id="KW-0862">Zinc</keyword>